<organism>
    <name type="scientific">Actinobacillus pleuropneumoniae serotype 3 (strain JL03)</name>
    <dbReference type="NCBI Taxonomy" id="434271"/>
    <lineage>
        <taxon>Bacteria</taxon>
        <taxon>Pseudomonadati</taxon>
        <taxon>Pseudomonadota</taxon>
        <taxon>Gammaproteobacteria</taxon>
        <taxon>Pasteurellales</taxon>
        <taxon>Pasteurellaceae</taxon>
        <taxon>Actinobacillus</taxon>
    </lineage>
</organism>
<feature type="chain" id="PRO_1000089063" description="Argininosuccinate lyase">
    <location>
        <begin position="1"/>
        <end position="458"/>
    </location>
</feature>
<keyword id="KW-0028">Amino-acid biosynthesis</keyword>
<keyword id="KW-0055">Arginine biosynthesis</keyword>
<keyword id="KW-0963">Cytoplasm</keyword>
<keyword id="KW-0456">Lyase</keyword>
<sequence length="458" mass="51046">MALWGGRFKQEADAKFKFFNDSLRFDYRLALQDIDGSIGWAKAITSVGILTEQEHQQLVVALKELRAEIEPNIAIILRDDAEDIHSWVESKLIEKVGDLGKKLHTGRSRNDQVAVDMKMWCKVQAVVLQERIRNLQHKLVETAEANQNAVMPGYTHLQRAQPITFAHWCMAYYEMLERDFSRLTDAYKRMHTCPLGSGALAGTAYSIDRDALAQDLGFAIGTRNSLDSVSDRDHVLELLSTASISMVHLSRFAEDLIFFNSGESAFLELSDRVTSGSSLMPQKKNPDACELIRGKSGRVFGALSGLLTTLKGLPLAYNKDMQEDKEGIFDAMETWQACLEIGALVLEDINVNVERTREAAQQGYSNATELADYLVAKGIPFREAHHIVGEAVVYAISKREPLEALSVAEFKQFHPVIDEDVYPILSLESCLEKRSAKGGVNPERVREAIEAAKVNLGA</sequence>
<dbReference type="EC" id="4.3.2.1" evidence="1"/>
<dbReference type="EMBL" id="CP000687">
    <property type="protein sequence ID" value="ABY69757.1"/>
    <property type="molecule type" value="Genomic_DNA"/>
</dbReference>
<dbReference type="RefSeq" id="WP_005612607.1">
    <property type="nucleotide sequence ID" value="NC_010278.1"/>
</dbReference>
<dbReference type="SMR" id="B0BQC2"/>
<dbReference type="KEGG" id="apj:APJL_1201"/>
<dbReference type="HOGENOM" id="CLU_027272_2_3_6"/>
<dbReference type="UniPathway" id="UPA00068">
    <property type="reaction ID" value="UER00114"/>
</dbReference>
<dbReference type="Proteomes" id="UP000008547">
    <property type="component" value="Chromosome"/>
</dbReference>
<dbReference type="GO" id="GO:0005829">
    <property type="term" value="C:cytosol"/>
    <property type="evidence" value="ECO:0007669"/>
    <property type="project" value="TreeGrafter"/>
</dbReference>
<dbReference type="GO" id="GO:0004056">
    <property type="term" value="F:argininosuccinate lyase activity"/>
    <property type="evidence" value="ECO:0007669"/>
    <property type="project" value="UniProtKB-UniRule"/>
</dbReference>
<dbReference type="GO" id="GO:0042450">
    <property type="term" value="P:arginine biosynthetic process via ornithine"/>
    <property type="evidence" value="ECO:0007669"/>
    <property type="project" value="InterPro"/>
</dbReference>
<dbReference type="GO" id="GO:0006526">
    <property type="term" value="P:L-arginine biosynthetic process"/>
    <property type="evidence" value="ECO:0007669"/>
    <property type="project" value="UniProtKB-UniRule"/>
</dbReference>
<dbReference type="CDD" id="cd01359">
    <property type="entry name" value="Argininosuccinate_lyase"/>
    <property type="match status" value="1"/>
</dbReference>
<dbReference type="FunFam" id="1.10.40.30:FF:000001">
    <property type="entry name" value="Argininosuccinate lyase"/>
    <property type="match status" value="1"/>
</dbReference>
<dbReference type="FunFam" id="1.20.200.10:FF:000006">
    <property type="entry name" value="Argininosuccinate lyase"/>
    <property type="match status" value="1"/>
</dbReference>
<dbReference type="Gene3D" id="1.10.40.30">
    <property type="entry name" value="Fumarase/aspartase (C-terminal domain)"/>
    <property type="match status" value="1"/>
</dbReference>
<dbReference type="Gene3D" id="1.20.200.10">
    <property type="entry name" value="Fumarase/aspartase (Central domain)"/>
    <property type="match status" value="1"/>
</dbReference>
<dbReference type="Gene3D" id="1.10.275.10">
    <property type="entry name" value="Fumarase/aspartase (N-terminal domain)"/>
    <property type="match status" value="1"/>
</dbReference>
<dbReference type="HAMAP" id="MF_00006">
    <property type="entry name" value="Arg_succ_lyase"/>
    <property type="match status" value="1"/>
</dbReference>
<dbReference type="InterPro" id="IPR029419">
    <property type="entry name" value="Arg_succ_lyase_C"/>
</dbReference>
<dbReference type="InterPro" id="IPR009049">
    <property type="entry name" value="Argininosuccinate_lyase"/>
</dbReference>
<dbReference type="InterPro" id="IPR024083">
    <property type="entry name" value="Fumarase/histidase_N"/>
</dbReference>
<dbReference type="InterPro" id="IPR020557">
    <property type="entry name" value="Fumarate_lyase_CS"/>
</dbReference>
<dbReference type="InterPro" id="IPR000362">
    <property type="entry name" value="Fumarate_lyase_fam"/>
</dbReference>
<dbReference type="InterPro" id="IPR022761">
    <property type="entry name" value="Fumarate_lyase_N"/>
</dbReference>
<dbReference type="InterPro" id="IPR008948">
    <property type="entry name" value="L-Aspartase-like"/>
</dbReference>
<dbReference type="NCBIfam" id="TIGR00838">
    <property type="entry name" value="argH"/>
    <property type="match status" value="1"/>
</dbReference>
<dbReference type="NCBIfam" id="NF008964">
    <property type="entry name" value="PRK12308.1"/>
    <property type="match status" value="1"/>
</dbReference>
<dbReference type="PANTHER" id="PTHR43814">
    <property type="entry name" value="ARGININOSUCCINATE LYASE"/>
    <property type="match status" value="1"/>
</dbReference>
<dbReference type="PANTHER" id="PTHR43814:SF1">
    <property type="entry name" value="ARGININOSUCCINATE LYASE"/>
    <property type="match status" value="1"/>
</dbReference>
<dbReference type="Pfam" id="PF14698">
    <property type="entry name" value="ASL_C2"/>
    <property type="match status" value="1"/>
</dbReference>
<dbReference type="Pfam" id="PF00206">
    <property type="entry name" value="Lyase_1"/>
    <property type="match status" value="1"/>
</dbReference>
<dbReference type="PRINTS" id="PR00145">
    <property type="entry name" value="ARGSUCLYASE"/>
</dbReference>
<dbReference type="PRINTS" id="PR00149">
    <property type="entry name" value="FUMRATELYASE"/>
</dbReference>
<dbReference type="SUPFAM" id="SSF48557">
    <property type="entry name" value="L-aspartase-like"/>
    <property type="match status" value="1"/>
</dbReference>
<dbReference type="PROSITE" id="PS00163">
    <property type="entry name" value="FUMARATE_LYASES"/>
    <property type="match status" value="1"/>
</dbReference>
<gene>
    <name evidence="1" type="primary">argH</name>
    <name type="ordered locus">APJL_1201</name>
</gene>
<reference key="1">
    <citation type="journal article" date="2008" name="PLoS ONE">
        <title>Genome biology of Actinobacillus pleuropneumoniae JL03, an isolate of serotype 3 prevalent in China.</title>
        <authorList>
            <person name="Xu Z."/>
            <person name="Zhou Y."/>
            <person name="Li L."/>
            <person name="Zhou R."/>
            <person name="Xiao S."/>
            <person name="Wan Y."/>
            <person name="Zhang S."/>
            <person name="Wang K."/>
            <person name="Li W."/>
            <person name="Li L."/>
            <person name="Jin H."/>
            <person name="Kang M."/>
            <person name="Dalai B."/>
            <person name="Li T."/>
            <person name="Liu L."/>
            <person name="Cheng Y."/>
            <person name="Zhang L."/>
            <person name="Xu T."/>
            <person name="Zheng H."/>
            <person name="Pu S."/>
            <person name="Wang B."/>
            <person name="Gu W."/>
            <person name="Zhang X.L."/>
            <person name="Zhu G.-F."/>
            <person name="Wang S."/>
            <person name="Zhao G.-P."/>
            <person name="Chen H."/>
        </authorList>
    </citation>
    <scope>NUCLEOTIDE SEQUENCE [LARGE SCALE GENOMIC DNA]</scope>
    <source>
        <strain>JL03</strain>
    </source>
</reference>
<evidence type="ECO:0000255" key="1">
    <source>
        <dbReference type="HAMAP-Rule" id="MF_00006"/>
    </source>
</evidence>
<accession>B0BQC2</accession>
<proteinExistence type="inferred from homology"/>
<protein>
    <recommendedName>
        <fullName evidence="1">Argininosuccinate lyase</fullName>
        <shortName evidence="1">ASAL</shortName>
        <ecNumber evidence="1">4.3.2.1</ecNumber>
    </recommendedName>
    <alternativeName>
        <fullName evidence="1">Arginosuccinase</fullName>
    </alternativeName>
</protein>
<name>ARLY_ACTPJ</name>
<comment type="catalytic activity">
    <reaction evidence="1">
        <text>2-(N(omega)-L-arginino)succinate = fumarate + L-arginine</text>
        <dbReference type="Rhea" id="RHEA:24020"/>
        <dbReference type="ChEBI" id="CHEBI:29806"/>
        <dbReference type="ChEBI" id="CHEBI:32682"/>
        <dbReference type="ChEBI" id="CHEBI:57472"/>
        <dbReference type="EC" id="4.3.2.1"/>
    </reaction>
</comment>
<comment type="pathway">
    <text evidence="1">Amino-acid biosynthesis; L-arginine biosynthesis; L-arginine from L-ornithine and carbamoyl phosphate: step 3/3.</text>
</comment>
<comment type="subcellular location">
    <subcellularLocation>
        <location evidence="1">Cytoplasm</location>
    </subcellularLocation>
</comment>
<comment type="similarity">
    <text evidence="1">Belongs to the lyase 1 family. Argininosuccinate lyase subfamily.</text>
</comment>